<feature type="chain" id="PRO_0000054669" description="3-oxoacyl-[acyl-carrier-protein] reductase FabG">
    <location>
        <begin position="1"/>
        <end position="248"/>
    </location>
</feature>
<feature type="active site" description="Proton acceptor" evidence="2">
    <location>
        <position position="157"/>
    </location>
</feature>
<feature type="binding site" evidence="1">
    <location>
        <begin position="14"/>
        <end position="17"/>
    </location>
    <ligand>
        <name>NADP(+)</name>
        <dbReference type="ChEBI" id="CHEBI:58349"/>
    </ligand>
</feature>
<feature type="binding site" evidence="1">
    <location>
        <begin position="65"/>
        <end position="66"/>
    </location>
    <ligand>
        <name>NADP(+)</name>
        <dbReference type="ChEBI" id="CHEBI:58349"/>
    </ligand>
</feature>
<feature type="binding site" evidence="1">
    <location>
        <position position="92"/>
    </location>
    <ligand>
        <name>NADP(+)</name>
        <dbReference type="ChEBI" id="CHEBI:58349"/>
    </ligand>
</feature>
<feature type="binding site" evidence="1">
    <location>
        <position position="144"/>
    </location>
    <ligand>
        <name>substrate</name>
    </ligand>
</feature>
<feature type="binding site" evidence="1">
    <location>
        <begin position="157"/>
        <end position="161"/>
    </location>
    <ligand>
        <name>NADP(+)</name>
        <dbReference type="ChEBI" id="CHEBI:58349"/>
    </ligand>
</feature>
<feature type="binding site" evidence="1">
    <location>
        <position position="190"/>
    </location>
    <ligand>
        <name>NADP(+)</name>
        <dbReference type="ChEBI" id="CHEBI:58349"/>
    </ligand>
</feature>
<proteinExistence type="inferred from homology"/>
<reference key="1">
    <citation type="journal article" date="2000" name="Nucleic Acids Res.">
        <title>Genome sequences of Chlamydia trachomatis MoPn and Chlamydia pneumoniae AR39.</title>
        <authorList>
            <person name="Read T.D."/>
            <person name="Brunham R.C."/>
            <person name="Shen C."/>
            <person name="Gill S.R."/>
            <person name="Heidelberg J.F."/>
            <person name="White O."/>
            <person name="Hickey E.K."/>
            <person name="Peterson J.D."/>
            <person name="Utterback T.R."/>
            <person name="Berry K.J."/>
            <person name="Bass S."/>
            <person name="Linher K.D."/>
            <person name="Weidman J.F."/>
            <person name="Khouri H.M."/>
            <person name="Craven B."/>
            <person name="Bowman C."/>
            <person name="Dodson R.J."/>
            <person name="Gwinn M.L."/>
            <person name="Nelson W.C."/>
            <person name="DeBoy R.T."/>
            <person name="Kolonay J.F."/>
            <person name="McClarty G."/>
            <person name="Salzberg S.L."/>
            <person name="Eisen J.A."/>
            <person name="Fraser C.M."/>
        </authorList>
    </citation>
    <scope>NUCLEOTIDE SEQUENCE [LARGE SCALE GENOMIC DNA]</scope>
    <source>
        <strain>MoPn / Nigg</strain>
    </source>
</reference>
<name>FABG_CHLMU</name>
<organism>
    <name type="scientific">Chlamydia muridarum (strain MoPn / Nigg)</name>
    <dbReference type="NCBI Taxonomy" id="243161"/>
    <lineage>
        <taxon>Bacteria</taxon>
        <taxon>Pseudomonadati</taxon>
        <taxon>Chlamydiota</taxon>
        <taxon>Chlamydiia</taxon>
        <taxon>Chlamydiales</taxon>
        <taxon>Chlamydiaceae</taxon>
        <taxon>Chlamydia/Chlamydophila group</taxon>
        <taxon>Chlamydia</taxon>
    </lineage>
</organism>
<evidence type="ECO:0000250" key="1"/>
<evidence type="ECO:0000255" key="2">
    <source>
        <dbReference type="PROSITE-ProRule" id="PRU10001"/>
    </source>
</evidence>
<evidence type="ECO:0000305" key="3"/>
<comment type="function">
    <text evidence="1">Catalyzes the NADPH-dependent reduction of beta-ketoacyl-ACP substrates to beta-hydroxyacyl-ACP products, the first reductive step in the elongation cycle of fatty acid biosynthesis.</text>
</comment>
<comment type="catalytic activity">
    <reaction>
        <text>a (3R)-hydroxyacyl-[ACP] + NADP(+) = a 3-oxoacyl-[ACP] + NADPH + H(+)</text>
        <dbReference type="Rhea" id="RHEA:17397"/>
        <dbReference type="Rhea" id="RHEA-COMP:9916"/>
        <dbReference type="Rhea" id="RHEA-COMP:9945"/>
        <dbReference type="ChEBI" id="CHEBI:15378"/>
        <dbReference type="ChEBI" id="CHEBI:57783"/>
        <dbReference type="ChEBI" id="CHEBI:58349"/>
        <dbReference type="ChEBI" id="CHEBI:78776"/>
        <dbReference type="ChEBI" id="CHEBI:78827"/>
        <dbReference type="EC" id="1.1.1.100"/>
    </reaction>
</comment>
<comment type="pathway">
    <text>Lipid metabolism; fatty acid biosynthesis.</text>
</comment>
<comment type="subunit">
    <text evidence="1">Homotetramer.</text>
</comment>
<comment type="similarity">
    <text evidence="3">Belongs to the short-chain dehydrogenases/reductases (SDR) family.</text>
</comment>
<accession>Q9PKF7</accession>
<dbReference type="EC" id="1.1.1.100"/>
<dbReference type="EMBL" id="AE002160">
    <property type="protein sequence ID" value="AAF39350.1"/>
    <property type="molecule type" value="Genomic_DNA"/>
</dbReference>
<dbReference type="PIR" id="E81695">
    <property type="entry name" value="E81695"/>
</dbReference>
<dbReference type="RefSeq" id="WP_010230638.1">
    <property type="nucleotide sequence ID" value="NZ_CP063055.1"/>
</dbReference>
<dbReference type="SMR" id="Q9PKF7"/>
<dbReference type="GeneID" id="1245868"/>
<dbReference type="KEGG" id="cmu:TC_0508"/>
<dbReference type="eggNOG" id="COG1028">
    <property type="taxonomic scope" value="Bacteria"/>
</dbReference>
<dbReference type="HOGENOM" id="CLU_010194_1_3_0"/>
<dbReference type="OrthoDB" id="9803333at2"/>
<dbReference type="UniPathway" id="UPA00094"/>
<dbReference type="Proteomes" id="UP000000800">
    <property type="component" value="Chromosome"/>
</dbReference>
<dbReference type="GO" id="GO:0004316">
    <property type="term" value="F:3-oxoacyl-[acyl-carrier-protein] reductase (NADPH) activity"/>
    <property type="evidence" value="ECO:0007669"/>
    <property type="project" value="UniProtKB-EC"/>
</dbReference>
<dbReference type="GO" id="GO:0051287">
    <property type="term" value="F:NAD binding"/>
    <property type="evidence" value="ECO:0007669"/>
    <property type="project" value="InterPro"/>
</dbReference>
<dbReference type="GO" id="GO:0006633">
    <property type="term" value="P:fatty acid biosynthetic process"/>
    <property type="evidence" value="ECO:0007669"/>
    <property type="project" value="UniProtKB-UniPathway"/>
</dbReference>
<dbReference type="CDD" id="cd05333">
    <property type="entry name" value="BKR_SDR_c"/>
    <property type="match status" value="1"/>
</dbReference>
<dbReference type="FunFam" id="3.40.50.720:FF:000115">
    <property type="entry name" value="3-oxoacyl-[acyl-carrier-protein] reductase FabG"/>
    <property type="match status" value="1"/>
</dbReference>
<dbReference type="Gene3D" id="3.40.50.720">
    <property type="entry name" value="NAD(P)-binding Rossmann-like Domain"/>
    <property type="match status" value="1"/>
</dbReference>
<dbReference type="InterPro" id="IPR011284">
    <property type="entry name" value="3oxo_ACP_reduc"/>
</dbReference>
<dbReference type="InterPro" id="IPR036291">
    <property type="entry name" value="NAD(P)-bd_dom_sf"/>
</dbReference>
<dbReference type="InterPro" id="IPR020904">
    <property type="entry name" value="Sc_DH/Rdtase_CS"/>
</dbReference>
<dbReference type="InterPro" id="IPR050259">
    <property type="entry name" value="SDR"/>
</dbReference>
<dbReference type="InterPro" id="IPR002347">
    <property type="entry name" value="SDR_fam"/>
</dbReference>
<dbReference type="NCBIfam" id="TIGR01830">
    <property type="entry name" value="3oxo_ACP_reduc"/>
    <property type="match status" value="1"/>
</dbReference>
<dbReference type="NCBIfam" id="NF004197">
    <property type="entry name" value="PRK05653.1-1"/>
    <property type="match status" value="1"/>
</dbReference>
<dbReference type="NCBIfam" id="NF005559">
    <property type="entry name" value="PRK07231.1"/>
    <property type="match status" value="1"/>
</dbReference>
<dbReference type="NCBIfam" id="NF009466">
    <property type="entry name" value="PRK12826.1-2"/>
    <property type="match status" value="1"/>
</dbReference>
<dbReference type="PANTHER" id="PTHR42879">
    <property type="entry name" value="3-OXOACYL-(ACYL-CARRIER-PROTEIN) REDUCTASE"/>
    <property type="match status" value="1"/>
</dbReference>
<dbReference type="PANTHER" id="PTHR42879:SF2">
    <property type="entry name" value="3-OXOACYL-[ACYL-CARRIER-PROTEIN] REDUCTASE FABG"/>
    <property type="match status" value="1"/>
</dbReference>
<dbReference type="Pfam" id="PF13561">
    <property type="entry name" value="adh_short_C2"/>
    <property type="match status" value="1"/>
</dbReference>
<dbReference type="PRINTS" id="PR00081">
    <property type="entry name" value="GDHRDH"/>
</dbReference>
<dbReference type="PRINTS" id="PR00080">
    <property type="entry name" value="SDRFAMILY"/>
</dbReference>
<dbReference type="SMART" id="SM00822">
    <property type="entry name" value="PKS_KR"/>
    <property type="match status" value="1"/>
</dbReference>
<dbReference type="SUPFAM" id="SSF51735">
    <property type="entry name" value="NAD(P)-binding Rossmann-fold domains"/>
    <property type="match status" value="1"/>
</dbReference>
<dbReference type="PROSITE" id="PS00061">
    <property type="entry name" value="ADH_SHORT"/>
    <property type="match status" value="1"/>
</dbReference>
<gene>
    <name type="primary">fabG</name>
    <name type="ordered locus">TC_0508</name>
</gene>
<keyword id="KW-0275">Fatty acid biosynthesis</keyword>
<keyword id="KW-0276">Fatty acid metabolism</keyword>
<keyword id="KW-0444">Lipid biosynthesis</keyword>
<keyword id="KW-0443">Lipid metabolism</keyword>
<keyword id="KW-0521">NADP</keyword>
<keyword id="KW-0560">Oxidoreductase</keyword>
<protein>
    <recommendedName>
        <fullName>3-oxoacyl-[acyl-carrier-protein] reductase FabG</fullName>
        <ecNumber>1.1.1.100</ecNumber>
    </recommendedName>
    <alternativeName>
        <fullName>3-ketoacyl-acyl carrier protein reductase</fullName>
    </alternativeName>
    <alternativeName>
        <fullName>Beta-Ketoacyl-acyl carrier protein reductase</fullName>
    </alternativeName>
    <alternativeName>
        <fullName>Beta-ketoacyl-ACP reductase</fullName>
    </alternativeName>
</protein>
<sequence length="248" mass="25977">MNSLLVNKAAIVTGGSRGIGFGIAKLFAEHGANVQIWGINEEAGKSAAQDLSDKTGSKVSFALVDVSKNDMVSAQVQKFLAEYGTIDVVVNNAGITRDSLLMRMSEEEWSSVIDTNLGSIYNVCSAVIRPMIKARSGAIVNISSIVGLRGSPGQTNYAAAKAGIIGFSKALSKEVGSKNIRVNCIAPGFIDTDMTKGLSDNLKNEWLKGVPLGRVGTPEEIAMAALFLASNQSSYITGQVLSVDGGMA</sequence>